<protein>
    <recommendedName>
        <fullName evidence="1">Large ribosomal subunit protein uL16</fullName>
    </recommendedName>
    <alternativeName>
        <fullName evidence="2">50S ribosomal protein L16</fullName>
    </alternativeName>
</protein>
<gene>
    <name evidence="1" type="primary">rplP</name>
    <name type="ordered locus">SPG_0202</name>
</gene>
<comment type="function">
    <text evidence="1">Binds 23S rRNA and is also seen to make contacts with the A and possibly P site tRNAs.</text>
</comment>
<comment type="subunit">
    <text evidence="1">Part of the 50S ribosomal subunit.</text>
</comment>
<comment type="similarity">
    <text evidence="1">Belongs to the universal ribosomal protein uL16 family.</text>
</comment>
<accession>B5E6G2</accession>
<evidence type="ECO:0000255" key="1">
    <source>
        <dbReference type="HAMAP-Rule" id="MF_01342"/>
    </source>
</evidence>
<evidence type="ECO:0000305" key="2"/>
<proteinExistence type="inferred from homology"/>
<reference key="1">
    <citation type="journal article" date="2001" name="Microb. Drug Resist.">
        <title>Annotated draft genomic sequence from a Streptococcus pneumoniae type 19F clinical isolate.</title>
        <authorList>
            <person name="Dopazo J."/>
            <person name="Mendoza A."/>
            <person name="Herrero J."/>
            <person name="Caldara F."/>
            <person name="Humbert Y."/>
            <person name="Friedli L."/>
            <person name="Guerrier M."/>
            <person name="Grand-Schenk E."/>
            <person name="Gandin C."/>
            <person name="de Francesco M."/>
            <person name="Polissi A."/>
            <person name="Buell G."/>
            <person name="Feger G."/>
            <person name="Garcia E."/>
            <person name="Peitsch M."/>
            <person name="Garcia-Bustos J.F."/>
        </authorList>
    </citation>
    <scope>NUCLEOTIDE SEQUENCE [LARGE SCALE GENOMIC DNA]</scope>
    <source>
        <strain>G54</strain>
    </source>
</reference>
<reference key="2">
    <citation type="submission" date="2008-03" db="EMBL/GenBank/DDBJ databases">
        <title>Pneumococcal beta glucoside metabolism investigated by whole genome comparison.</title>
        <authorList>
            <person name="Mulas L."/>
            <person name="Trappetti C."/>
            <person name="Hakenbeck R."/>
            <person name="Iannelli F."/>
            <person name="Pozzi G."/>
            <person name="Davidsen T.M."/>
            <person name="Tettelin H."/>
            <person name="Oggioni M."/>
        </authorList>
    </citation>
    <scope>NUCLEOTIDE SEQUENCE [LARGE SCALE GENOMIC DNA]</scope>
    <source>
        <strain>G54</strain>
    </source>
</reference>
<feature type="chain" id="PRO_1000143035" description="Large ribosomal subunit protein uL16">
    <location>
        <begin position="1"/>
        <end position="137"/>
    </location>
</feature>
<keyword id="KW-0687">Ribonucleoprotein</keyword>
<keyword id="KW-0689">Ribosomal protein</keyword>
<keyword id="KW-0694">RNA-binding</keyword>
<keyword id="KW-0699">rRNA-binding</keyword>
<keyword id="KW-0820">tRNA-binding</keyword>
<organism>
    <name type="scientific">Streptococcus pneumoniae serotype 19F (strain G54)</name>
    <dbReference type="NCBI Taxonomy" id="512566"/>
    <lineage>
        <taxon>Bacteria</taxon>
        <taxon>Bacillati</taxon>
        <taxon>Bacillota</taxon>
        <taxon>Bacilli</taxon>
        <taxon>Lactobacillales</taxon>
        <taxon>Streptococcaceae</taxon>
        <taxon>Streptococcus</taxon>
    </lineage>
</organism>
<dbReference type="EMBL" id="CP001015">
    <property type="protein sequence ID" value="ACF54810.1"/>
    <property type="molecule type" value="Genomic_DNA"/>
</dbReference>
<dbReference type="SMR" id="B5E6G2"/>
<dbReference type="KEGG" id="spx:SPG_0202"/>
<dbReference type="HOGENOM" id="CLU_078858_2_1_9"/>
<dbReference type="GO" id="GO:0022625">
    <property type="term" value="C:cytosolic large ribosomal subunit"/>
    <property type="evidence" value="ECO:0007669"/>
    <property type="project" value="TreeGrafter"/>
</dbReference>
<dbReference type="GO" id="GO:0019843">
    <property type="term" value="F:rRNA binding"/>
    <property type="evidence" value="ECO:0007669"/>
    <property type="project" value="UniProtKB-UniRule"/>
</dbReference>
<dbReference type="GO" id="GO:0003735">
    <property type="term" value="F:structural constituent of ribosome"/>
    <property type="evidence" value="ECO:0007669"/>
    <property type="project" value="InterPro"/>
</dbReference>
<dbReference type="GO" id="GO:0000049">
    <property type="term" value="F:tRNA binding"/>
    <property type="evidence" value="ECO:0007669"/>
    <property type="project" value="UniProtKB-KW"/>
</dbReference>
<dbReference type="GO" id="GO:0006412">
    <property type="term" value="P:translation"/>
    <property type="evidence" value="ECO:0007669"/>
    <property type="project" value="UniProtKB-UniRule"/>
</dbReference>
<dbReference type="CDD" id="cd01433">
    <property type="entry name" value="Ribosomal_L16_L10e"/>
    <property type="match status" value="1"/>
</dbReference>
<dbReference type="FunFam" id="3.90.1170.10:FF:000001">
    <property type="entry name" value="50S ribosomal protein L16"/>
    <property type="match status" value="1"/>
</dbReference>
<dbReference type="Gene3D" id="3.90.1170.10">
    <property type="entry name" value="Ribosomal protein L10e/L16"/>
    <property type="match status" value="1"/>
</dbReference>
<dbReference type="HAMAP" id="MF_01342">
    <property type="entry name" value="Ribosomal_uL16"/>
    <property type="match status" value="1"/>
</dbReference>
<dbReference type="InterPro" id="IPR047873">
    <property type="entry name" value="Ribosomal_uL16"/>
</dbReference>
<dbReference type="InterPro" id="IPR000114">
    <property type="entry name" value="Ribosomal_uL16_bact-type"/>
</dbReference>
<dbReference type="InterPro" id="IPR020798">
    <property type="entry name" value="Ribosomal_uL16_CS"/>
</dbReference>
<dbReference type="InterPro" id="IPR016180">
    <property type="entry name" value="Ribosomal_uL16_dom"/>
</dbReference>
<dbReference type="InterPro" id="IPR036920">
    <property type="entry name" value="Ribosomal_uL16_sf"/>
</dbReference>
<dbReference type="NCBIfam" id="TIGR01164">
    <property type="entry name" value="rplP_bact"/>
    <property type="match status" value="1"/>
</dbReference>
<dbReference type="PANTHER" id="PTHR12220">
    <property type="entry name" value="50S/60S RIBOSOMAL PROTEIN L16"/>
    <property type="match status" value="1"/>
</dbReference>
<dbReference type="PANTHER" id="PTHR12220:SF13">
    <property type="entry name" value="LARGE RIBOSOMAL SUBUNIT PROTEIN UL16M"/>
    <property type="match status" value="1"/>
</dbReference>
<dbReference type="Pfam" id="PF00252">
    <property type="entry name" value="Ribosomal_L16"/>
    <property type="match status" value="1"/>
</dbReference>
<dbReference type="PRINTS" id="PR00060">
    <property type="entry name" value="RIBOSOMALL16"/>
</dbReference>
<dbReference type="SUPFAM" id="SSF54686">
    <property type="entry name" value="Ribosomal protein L16p/L10e"/>
    <property type="match status" value="1"/>
</dbReference>
<dbReference type="PROSITE" id="PS00586">
    <property type="entry name" value="RIBOSOMAL_L16_1"/>
    <property type="match status" value="1"/>
</dbReference>
<dbReference type="PROSITE" id="PS00701">
    <property type="entry name" value="RIBOSOMAL_L16_2"/>
    <property type="match status" value="1"/>
</dbReference>
<sequence>MLVPKRVKHRREFRGKMRGEAKGGKEVAFGEYGLQATTSHWITNRQIEAARIAMTRYMKRGGKVWIKIFPHKSYTAKAIGVRMGSGKGAPEGWVAPVKRGKVMFEIAGVSEEIAREALRLASHKLPVKCKFVKREAE</sequence>
<name>RL16_STRP4</name>